<accession>A4YVF1</accession>
<keyword id="KW-0030">Aminoacyl-tRNA synthetase</keyword>
<keyword id="KW-0067">ATP-binding</keyword>
<keyword id="KW-0963">Cytoplasm</keyword>
<keyword id="KW-0436">Ligase</keyword>
<keyword id="KW-0547">Nucleotide-binding</keyword>
<keyword id="KW-0648">Protein biosynthesis</keyword>
<keyword id="KW-1185">Reference proteome</keyword>
<proteinExistence type="inferred from homology"/>
<protein>
    <recommendedName>
        <fullName evidence="1">Glutamate--tRNA ligase</fullName>
        <ecNumber evidence="1">6.1.1.17</ecNumber>
    </recommendedName>
    <alternativeName>
        <fullName evidence="1">Glutamyl-tRNA synthetase</fullName>
        <shortName evidence="1">GluRS</shortName>
    </alternativeName>
</protein>
<feature type="chain" id="PRO_0000330956" description="Glutamate--tRNA ligase">
    <location>
        <begin position="1"/>
        <end position="478"/>
    </location>
</feature>
<feature type="short sequence motif" description="'HIGH' region" evidence="1">
    <location>
        <begin position="15"/>
        <end position="25"/>
    </location>
</feature>
<feature type="short sequence motif" description="'KMSKS' region" evidence="1">
    <location>
        <begin position="244"/>
        <end position="248"/>
    </location>
</feature>
<feature type="binding site" evidence="1">
    <location>
        <position position="247"/>
    </location>
    <ligand>
        <name>ATP</name>
        <dbReference type="ChEBI" id="CHEBI:30616"/>
    </ligand>
</feature>
<gene>
    <name evidence="1" type="primary">gltX</name>
    <name type="ordered locus">BRADO4125</name>
</gene>
<sequence>MTSSTTSSIVTRFAPSPTGFLHIGGARTALFNWLYARGRGGKMLLRIEDTDRERSTTAAIDAILDGLKWLELDWDGEVIYQYSRAARHREVAEQLLATGMAYRCYATAEELVAMREKARAEGRTRLYDGMWRDRDPKEAPEGVKPTIRLRAPLTGETMVEDQVQGRVVWQNENLDDLVLLRGDGNPTYMLAVVVDDHDMGVTHVIRGDDHLINAARQKQIYDALGWTVPSMSHIPLIHGPDGSKLSKRHGALGVDAYRAMGYLPSALRNYLVRLGWSHGDQEIFSTEEMIKAFDLPAIGRSAARFDFAKLENLNGHYIRHSDDAELVRQFEDVLNYVPNGAALKAKLNDATRAQLTQAMPSLKERAKTLLELIDGAAFIFADRPLPIDAKAAALLTPESRALIGRLHAALSAVEPWSGPATEAALRAFAEANNLKLGAVAQPLRAALTGRTTSPGIFDVLAILGRDESLGRLKDQAIA</sequence>
<reference key="1">
    <citation type="journal article" date="2007" name="Science">
        <title>Legumes symbioses: absence of nod genes in photosynthetic bradyrhizobia.</title>
        <authorList>
            <person name="Giraud E."/>
            <person name="Moulin L."/>
            <person name="Vallenet D."/>
            <person name="Barbe V."/>
            <person name="Cytryn E."/>
            <person name="Avarre J.-C."/>
            <person name="Jaubert M."/>
            <person name="Simon D."/>
            <person name="Cartieaux F."/>
            <person name="Prin Y."/>
            <person name="Bena G."/>
            <person name="Hannibal L."/>
            <person name="Fardoux J."/>
            <person name="Kojadinovic M."/>
            <person name="Vuillet L."/>
            <person name="Lajus A."/>
            <person name="Cruveiller S."/>
            <person name="Rouy Z."/>
            <person name="Mangenot S."/>
            <person name="Segurens B."/>
            <person name="Dossat C."/>
            <person name="Franck W.L."/>
            <person name="Chang W.-S."/>
            <person name="Saunders E."/>
            <person name="Bruce D."/>
            <person name="Richardson P."/>
            <person name="Normand P."/>
            <person name="Dreyfus B."/>
            <person name="Pignol D."/>
            <person name="Stacey G."/>
            <person name="Emerich D."/>
            <person name="Vermeglio A."/>
            <person name="Medigue C."/>
            <person name="Sadowsky M."/>
        </authorList>
    </citation>
    <scope>NUCLEOTIDE SEQUENCE [LARGE SCALE GENOMIC DNA]</scope>
    <source>
        <strain>ORS 278</strain>
    </source>
</reference>
<evidence type="ECO:0000255" key="1">
    <source>
        <dbReference type="HAMAP-Rule" id="MF_00022"/>
    </source>
</evidence>
<name>SYE_BRASO</name>
<dbReference type="EC" id="6.1.1.17" evidence="1"/>
<dbReference type="EMBL" id="CU234118">
    <property type="protein sequence ID" value="CAL77877.1"/>
    <property type="molecule type" value="Genomic_DNA"/>
</dbReference>
<dbReference type="RefSeq" id="WP_011927006.1">
    <property type="nucleotide sequence ID" value="NC_009445.1"/>
</dbReference>
<dbReference type="SMR" id="A4YVF1"/>
<dbReference type="STRING" id="114615.BRADO4125"/>
<dbReference type="KEGG" id="bra:BRADO4125"/>
<dbReference type="eggNOG" id="COG0008">
    <property type="taxonomic scope" value="Bacteria"/>
</dbReference>
<dbReference type="HOGENOM" id="CLU_015768_6_0_5"/>
<dbReference type="OrthoDB" id="9807503at2"/>
<dbReference type="Proteomes" id="UP000001994">
    <property type="component" value="Chromosome"/>
</dbReference>
<dbReference type="GO" id="GO:0005829">
    <property type="term" value="C:cytosol"/>
    <property type="evidence" value="ECO:0007669"/>
    <property type="project" value="TreeGrafter"/>
</dbReference>
<dbReference type="GO" id="GO:0005524">
    <property type="term" value="F:ATP binding"/>
    <property type="evidence" value="ECO:0007669"/>
    <property type="project" value="UniProtKB-UniRule"/>
</dbReference>
<dbReference type="GO" id="GO:0004818">
    <property type="term" value="F:glutamate-tRNA ligase activity"/>
    <property type="evidence" value="ECO:0007669"/>
    <property type="project" value="UniProtKB-UniRule"/>
</dbReference>
<dbReference type="GO" id="GO:0000049">
    <property type="term" value="F:tRNA binding"/>
    <property type="evidence" value="ECO:0007669"/>
    <property type="project" value="InterPro"/>
</dbReference>
<dbReference type="GO" id="GO:0008270">
    <property type="term" value="F:zinc ion binding"/>
    <property type="evidence" value="ECO:0007669"/>
    <property type="project" value="InterPro"/>
</dbReference>
<dbReference type="GO" id="GO:0006424">
    <property type="term" value="P:glutamyl-tRNA aminoacylation"/>
    <property type="evidence" value="ECO:0007669"/>
    <property type="project" value="UniProtKB-UniRule"/>
</dbReference>
<dbReference type="CDD" id="cd00808">
    <property type="entry name" value="GluRS_core"/>
    <property type="match status" value="1"/>
</dbReference>
<dbReference type="FunFam" id="3.40.50.620:FF:000007">
    <property type="entry name" value="Glutamate--tRNA ligase"/>
    <property type="match status" value="1"/>
</dbReference>
<dbReference type="Gene3D" id="1.10.10.350">
    <property type="match status" value="1"/>
</dbReference>
<dbReference type="Gene3D" id="3.40.50.620">
    <property type="entry name" value="HUPs"/>
    <property type="match status" value="1"/>
</dbReference>
<dbReference type="HAMAP" id="MF_00022">
    <property type="entry name" value="Glu_tRNA_synth_type1"/>
    <property type="match status" value="1"/>
</dbReference>
<dbReference type="InterPro" id="IPR045462">
    <property type="entry name" value="aa-tRNA-synth_I_cd-bd"/>
</dbReference>
<dbReference type="InterPro" id="IPR020751">
    <property type="entry name" value="aa-tRNA-synth_I_codon-bd_sub2"/>
</dbReference>
<dbReference type="InterPro" id="IPR001412">
    <property type="entry name" value="aa-tRNA-synth_I_CS"/>
</dbReference>
<dbReference type="InterPro" id="IPR008925">
    <property type="entry name" value="aa_tRNA-synth_I_cd-bd_sf"/>
</dbReference>
<dbReference type="InterPro" id="IPR004527">
    <property type="entry name" value="Glu-tRNA-ligase_bac/mito"/>
</dbReference>
<dbReference type="InterPro" id="IPR000924">
    <property type="entry name" value="Glu/Gln-tRNA-synth"/>
</dbReference>
<dbReference type="InterPro" id="IPR020058">
    <property type="entry name" value="Glu/Gln-tRNA-synth_Ib_cat-dom"/>
</dbReference>
<dbReference type="InterPro" id="IPR049940">
    <property type="entry name" value="GluQ/Sye"/>
</dbReference>
<dbReference type="InterPro" id="IPR033910">
    <property type="entry name" value="GluRS_core"/>
</dbReference>
<dbReference type="InterPro" id="IPR014729">
    <property type="entry name" value="Rossmann-like_a/b/a_fold"/>
</dbReference>
<dbReference type="NCBIfam" id="TIGR00464">
    <property type="entry name" value="gltX_bact"/>
    <property type="match status" value="1"/>
</dbReference>
<dbReference type="PANTHER" id="PTHR43311">
    <property type="entry name" value="GLUTAMATE--TRNA LIGASE"/>
    <property type="match status" value="1"/>
</dbReference>
<dbReference type="PANTHER" id="PTHR43311:SF2">
    <property type="entry name" value="GLUTAMATE--TRNA LIGASE, MITOCHONDRIAL-RELATED"/>
    <property type="match status" value="1"/>
</dbReference>
<dbReference type="Pfam" id="PF19269">
    <property type="entry name" value="Anticodon_2"/>
    <property type="match status" value="1"/>
</dbReference>
<dbReference type="Pfam" id="PF00749">
    <property type="entry name" value="tRNA-synt_1c"/>
    <property type="match status" value="1"/>
</dbReference>
<dbReference type="PRINTS" id="PR00987">
    <property type="entry name" value="TRNASYNTHGLU"/>
</dbReference>
<dbReference type="SUPFAM" id="SSF48163">
    <property type="entry name" value="An anticodon-binding domain of class I aminoacyl-tRNA synthetases"/>
    <property type="match status" value="1"/>
</dbReference>
<dbReference type="SUPFAM" id="SSF52374">
    <property type="entry name" value="Nucleotidylyl transferase"/>
    <property type="match status" value="1"/>
</dbReference>
<dbReference type="PROSITE" id="PS00178">
    <property type="entry name" value="AA_TRNA_LIGASE_I"/>
    <property type="match status" value="1"/>
</dbReference>
<comment type="function">
    <text evidence="1">Catalyzes the attachment of glutamate to tRNA(Glu) in a two-step reaction: glutamate is first activated by ATP to form Glu-AMP and then transferred to the acceptor end of tRNA(Glu).</text>
</comment>
<comment type="catalytic activity">
    <reaction evidence="1">
        <text>tRNA(Glu) + L-glutamate + ATP = L-glutamyl-tRNA(Glu) + AMP + diphosphate</text>
        <dbReference type="Rhea" id="RHEA:23540"/>
        <dbReference type="Rhea" id="RHEA-COMP:9663"/>
        <dbReference type="Rhea" id="RHEA-COMP:9680"/>
        <dbReference type="ChEBI" id="CHEBI:29985"/>
        <dbReference type="ChEBI" id="CHEBI:30616"/>
        <dbReference type="ChEBI" id="CHEBI:33019"/>
        <dbReference type="ChEBI" id="CHEBI:78442"/>
        <dbReference type="ChEBI" id="CHEBI:78520"/>
        <dbReference type="ChEBI" id="CHEBI:456215"/>
        <dbReference type="EC" id="6.1.1.17"/>
    </reaction>
</comment>
<comment type="subunit">
    <text evidence="1">Monomer.</text>
</comment>
<comment type="subcellular location">
    <subcellularLocation>
        <location evidence="1">Cytoplasm</location>
    </subcellularLocation>
</comment>
<comment type="similarity">
    <text evidence="1">Belongs to the class-I aminoacyl-tRNA synthetase family. Glutamate--tRNA ligase type 1 subfamily.</text>
</comment>
<organism>
    <name type="scientific">Bradyrhizobium sp. (strain ORS 278)</name>
    <dbReference type="NCBI Taxonomy" id="114615"/>
    <lineage>
        <taxon>Bacteria</taxon>
        <taxon>Pseudomonadati</taxon>
        <taxon>Pseudomonadota</taxon>
        <taxon>Alphaproteobacteria</taxon>
        <taxon>Hyphomicrobiales</taxon>
        <taxon>Nitrobacteraceae</taxon>
        <taxon>Bradyrhizobium</taxon>
    </lineage>
</organism>